<accession>Q5E327</accession>
<dbReference type="EMBL" id="CP000020">
    <property type="protein sequence ID" value="AAW86569.1"/>
    <property type="molecule type" value="Genomic_DNA"/>
</dbReference>
<dbReference type="RefSeq" id="WP_005420699.1">
    <property type="nucleotide sequence ID" value="NZ_CAWLES010000001.1"/>
</dbReference>
<dbReference type="RefSeq" id="YP_205457.1">
    <property type="nucleotide sequence ID" value="NC_006840.2"/>
</dbReference>
<dbReference type="SMR" id="Q5E327"/>
<dbReference type="STRING" id="312309.VF_2074"/>
<dbReference type="EnsemblBacteria" id="AAW86569">
    <property type="protein sequence ID" value="AAW86569"/>
    <property type="gene ID" value="VF_2074"/>
</dbReference>
<dbReference type="GeneID" id="54164780"/>
<dbReference type="KEGG" id="vfi:VF_2074"/>
<dbReference type="PATRIC" id="fig|312309.11.peg.2117"/>
<dbReference type="eggNOG" id="COG2919">
    <property type="taxonomic scope" value="Bacteria"/>
</dbReference>
<dbReference type="HOGENOM" id="CLU_134863_5_2_6"/>
<dbReference type="OrthoDB" id="7061211at2"/>
<dbReference type="Proteomes" id="UP000000537">
    <property type="component" value="Chromosome I"/>
</dbReference>
<dbReference type="GO" id="GO:0032153">
    <property type="term" value="C:cell division site"/>
    <property type="evidence" value="ECO:0007669"/>
    <property type="project" value="UniProtKB-UniRule"/>
</dbReference>
<dbReference type="GO" id="GO:0030428">
    <property type="term" value="C:cell septum"/>
    <property type="evidence" value="ECO:0007669"/>
    <property type="project" value="TreeGrafter"/>
</dbReference>
<dbReference type="GO" id="GO:0005886">
    <property type="term" value="C:plasma membrane"/>
    <property type="evidence" value="ECO:0007669"/>
    <property type="project" value="UniProtKB-SubCell"/>
</dbReference>
<dbReference type="GO" id="GO:0043093">
    <property type="term" value="P:FtsZ-dependent cytokinesis"/>
    <property type="evidence" value="ECO:0007669"/>
    <property type="project" value="UniProtKB-UniRule"/>
</dbReference>
<dbReference type="Gene3D" id="1.20.5.400">
    <property type="match status" value="1"/>
</dbReference>
<dbReference type="HAMAP" id="MF_00599">
    <property type="entry name" value="FtsB"/>
    <property type="match status" value="1"/>
</dbReference>
<dbReference type="InterPro" id="IPR023081">
    <property type="entry name" value="Cell_div_FtsB"/>
</dbReference>
<dbReference type="InterPro" id="IPR007060">
    <property type="entry name" value="FtsL/DivIC"/>
</dbReference>
<dbReference type="NCBIfam" id="NF002058">
    <property type="entry name" value="PRK00888.1"/>
    <property type="match status" value="1"/>
</dbReference>
<dbReference type="PANTHER" id="PTHR37485">
    <property type="entry name" value="CELL DIVISION PROTEIN FTSB"/>
    <property type="match status" value="1"/>
</dbReference>
<dbReference type="PANTHER" id="PTHR37485:SF1">
    <property type="entry name" value="CELL DIVISION PROTEIN FTSB"/>
    <property type="match status" value="1"/>
</dbReference>
<dbReference type="Pfam" id="PF04977">
    <property type="entry name" value="DivIC"/>
    <property type="match status" value="1"/>
</dbReference>
<comment type="function">
    <text evidence="1">Essential cell division protein. May link together the upstream cell division proteins, which are predominantly cytoplasmic, with the downstream cell division proteins, which are predominantly periplasmic.</text>
</comment>
<comment type="subunit">
    <text evidence="1">Part of a complex composed of FtsB, FtsL and FtsQ.</text>
</comment>
<comment type="subcellular location">
    <subcellularLocation>
        <location evidence="1">Cell inner membrane</location>
        <topology evidence="1">Single-pass type II membrane protein</topology>
    </subcellularLocation>
    <text evidence="1">Localizes to the division septum.</text>
</comment>
<comment type="similarity">
    <text evidence="1">Belongs to the FtsB family.</text>
</comment>
<evidence type="ECO:0000255" key="1">
    <source>
        <dbReference type="HAMAP-Rule" id="MF_00599"/>
    </source>
</evidence>
<gene>
    <name evidence="1" type="primary">ftsB</name>
    <name type="ordered locus">VF_2074</name>
</gene>
<proteinExistence type="inferred from homology"/>
<reference key="1">
    <citation type="journal article" date="2005" name="Proc. Natl. Acad. Sci. U.S.A.">
        <title>Complete genome sequence of Vibrio fischeri: a symbiotic bacterium with pathogenic congeners.</title>
        <authorList>
            <person name="Ruby E.G."/>
            <person name="Urbanowski M."/>
            <person name="Campbell J."/>
            <person name="Dunn A."/>
            <person name="Faini M."/>
            <person name="Gunsalus R."/>
            <person name="Lostroh P."/>
            <person name="Lupp C."/>
            <person name="McCann J."/>
            <person name="Millikan D."/>
            <person name="Schaefer A."/>
            <person name="Stabb E."/>
            <person name="Stevens A."/>
            <person name="Visick K."/>
            <person name="Whistler C."/>
            <person name="Greenberg E.P."/>
        </authorList>
    </citation>
    <scope>NUCLEOTIDE SEQUENCE [LARGE SCALE GENOMIC DNA]</scope>
    <source>
        <strain>ATCC 700601 / ES114</strain>
    </source>
</reference>
<sequence>MRTFAIFLLIALGWLQYTLWFGKNGMSDYAQVSNDVALQEEVNQGLRNRNEQMFAEIDDLKKGSEAIEERARHELGMIKKGETFYRIIDENSEG</sequence>
<name>FTSB_ALIF1</name>
<organism>
    <name type="scientific">Aliivibrio fischeri (strain ATCC 700601 / ES114)</name>
    <name type="common">Vibrio fischeri</name>
    <dbReference type="NCBI Taxonomy" id="312309"/>
    <lineage>
        <taxon>Bacteria</taxon>
        <taxon>Pseudomonadati</taxon>
        <taxon>Pseudomonadota</taxon>
        <taxon>Gammaproteobacteria</taxon>
        <taxon>Vibrionales</taxon>
        <taxon>Vibrionaceae</taxon>
        <taxon>Aliivibrio</taxon>
    </lineage>
</organism>
<keyword id="KW-0131">Cell cycle</keyword>
<keyword id="KW-0132">Cell division</keyword>
<keyword id="KW-0997">Cell inner membrane</keyword>
<keyword id="KW-1003">Cell membrane</keyword>
<keyword id="KW-0175">Coiled coil</keyword>
<keyword id="KW-0472">Membrane</keyword>
<keyword id="KW-1185">Reference proteome</keyword>
<keyword id="KW-0812">Transmembrane</keyword>
<keyword id="KW-1133">Transmembrane helix</keyword>
<protein>
    <recommendedName>
        <fullName evidence="1">Cell division protein FtsB</fullName>
    </recommendedName>
</protein>
<feature type="chain" id="PRO_1000025733" description="Cell division protein FtsB">
    <location>
        <begin position="1"/>
        <end position="94"/>
    </location>
</feature>
<feature type="topological domain" description="Cytoplasmic" evidence="1">
    <location>
        <begin position="1"/>
        <end position="3"/>
    </location>
</feature>
<feature type="transmembrane region" description="Helical" evidence="1">
    <location>
        <begin position="4"/>
        <end position="21"/>
    </location>
</feature>
<feature type="topological domain" description="Periplasmic" evidence="1">
    <location>
        <begin position="22"/>
        <end position="94"/>
    </location>
</feature>
<feature type="coiled-coil region" evidence="1">
    <location>
        <begin position="33"/>
        <end position="71"/>
    </location>
</feature>